<organism>
    <name type="scientific">Deinococcus radiodurans (strain ATCC 13939 / DSM 20539 / JCM 16871 / CCUG 27074 / LMG 4051 / NBRC 15346 / NCIMB 9279 / VKM B-1422 / R1)</name>
    <dbReference type="NCBI Taxonomy" id="243230"/>
    <lineage>
        <taxon>Bacteria</taxon>
        <taxon>Thermotogati</taxon>
        <taxon>Deinococcota</taxon>
        <taxon>Deinococci</taxon>
        <taxon>Deinococcales</taxon>
        <taxon>Deinococcaceae</taxon>
        <taxon>Deinococcus</taxon>
    </lineage>
</organism>
<sequence>MGAFGWEQDRGAPFSGRSPRILTRMTDAPRPTAGADAPARPPAAPLVAPNFITEIIERDLEAGKYPRVVTRFPPDPSGYAHLGHVFASLLDFNTARQYGGQFNLRMDDTNPELARQEYVDSIADDLKWLGLDWGEHFYYASDYFDRYYAYAEQLIRQGDAYVESVSPEELSRLRGNATTPGTPSPYRDRSVEENLDLLRRMKAGEFADGEHVLRAKIDLTAPNMKLRDPVLYRIVNKPHFRTSDEWHIYPAYDFEHPLQDAIEGVTHSMCSLEFVDNRAIYDWLMEKLNFDPRPHQYEFGRRGLEYTITSKRKLRELVQAGRVSGWDDPRMPTLRAQRRLGVTPEAVRAFAAQIGVSRTNRTVDIAVYENAVRDDLNHRAPRVMAVLDPVKVTLTNLDGEKTLSLPYWPHDVVRDSPDGLVGMPGGGRVAPEEAVRDVPLTRELYIERDDFSPAPPKGFKRLTPGGTVRLRGAGIIRADDFGTDEAGQVTHIRATLLGEDAKAAGVIHWVSAERALPAEFRLYDRLFRVPHPEGENADVEDDSAGPAEHEAEPGAGQETAPVSQGFMRYLTPDSLRVLRGYVEPSVAGDPADTRYQFERQGYFWRDPVELERVDSREDALVFGRIITLKDTWGKQGGGTQQKAEGKKRPSTKGRGPDEVRGEGSSSPAKAHAPKAQPLTPEQDAEFTRLLGLGASEGDARTIARDPALLAFVGGAAPGDTFAQVASWTVNELVAGLRAGEVKVRAADLAPLAEGVASGQLSARIAREALARAAASGDAPLTIIEREGLNAGLSAEALQQVVAQVIAANPDKAEAYRGGKTALLGFFTGQVMRATAGKADPQALAAALKDALA</sequence>
<proteinExistence type="evidence at protein level"/>
<protein>
    <recommendedName>
        <fullName evidence="1">Glutamine--tRNA ligase</fullName>
        <ecNumber evidence="1">6.1.1.18</ecNumber>
    </recommendedName>
    <alternativeName>
        <fullName evidence="1">Glutaminyl-tRNA synthetase</fullName>
        <shortName evidence="1">GlnRS</shortName>
    </alternativeName>
</protein>
<comment type="catalytic activity">
    <reaction evidence="1">
        <text>tRNA(Gln) + L-glutamine + ATP = L-glutaminyl-tRNA(Gln) + AMP + diphosphate</text>
        <dbReference type="Rhea" id="RHEA:20121"/>
        <dbReference type="Rhea" id="RHEA-COMP:9662"/>
        <dbReference type="Rhea" id="RHEA-COMP:9681"/>
        <dbReference type="ChEBI" id="CHEBI:30616"/>
        <dbReference type="ChEBI" id="CHEBI:33019"/>
        <dbReference type="ChEBI" id="CHEBI:58359"/>
        <dbReference type="ChEBI" id="CHEBI:78442"/>
        <dbReference type="ChEBI" id="CHEBI:78521"/>
        <dbReference type="ChEBI" id="CHEBI:456215"/>
        <dbReference type="EC" id="6.1.1.18"/>
    </reaction>
</comment>
<comment type="subunit">
    <text evidence="1">Monomer.</text>
</comment>
<comment type="subcellular location">
    <subcellularLocation>
        <location evidence="1">Cytoplasm</location>
    </subcellularLocation>
</comment>
<comment type="similarity">
    <text evidence="3">In the N-terminal section; belongs to the class-I aminoacyl-tRNA synthetase family.</text>
</comment>
<comment type="similarity">
    <text evidence="3">In the C-terminal section; belongs to the GatB/GatE family.</text>
</comment>
<dbReference type="EC" id="6.1.1.18" evidence="1"/>
<dbReference type="EMBL" id="AE000513">
    <property type="protein sequence ID" value="AAF12148.1"/>
    <property type="molecule type" value="Genomic_DNA"/>
</dbReference>
<dbReference type="PIR" id="A75253">
    <property type="entry name" value="A75253"/>
</dbReference>
<dbReference type="RefSeq" id="NP_296330.1">
    <property type="nucleotide sequence ID" value="NC_001263.1"/>
</dbReference>
<dbReference type="PDB" id="2HZ7">
    <property type="method" value="X-ray"/>
    <property type="resolution" value="2.30 A"/>
    <property type="chains" value="A=2-852"/>
</dbReference>
<dbReference type="PDBsum" id="2HZ7"/>
<dbReference type="SMR" id="P56926"/>
<dbReference type="STRING" id="243230.DR_2611"/>
<dbReference type="PaxDb" id="243230-DR_2611"/>
<dbReference type="EnsemblBacteria" id="AAF12148">
    <property type="protein sequence ID" value="AAF12148"/>
    <property type="gene ID" value="DR_2611"/>
</dbReference>
<dbReference type="KEGG" id="dra:DR_2611"/>
<dbReference type="PATRIC" id="fig|243230.17.peg.2858"/>
<dbReference type="eggNOG" id="COG0008">
    <property type="taxonomic scope" value="Bacteria"/>
</dbReference>
<dbReference type="eggNOG" id="COG0064">
    <property type="taxonomic scope" value="Bacteria"/>
</dbReference>
<dbReference type="HOGENOM" id="CLU_001882_3_0_0"/>
<dbReference type="InParanoid" id="P56926"/>
<dbReference type="OrthoDB" id="9801560at2"/>
<dbReference type="BioCyc" id="MetaCyc:MONOMER-14055"/>
<dbReference type="BRENDA" id="6.1.1.18">
    <property type="organism ID" value="1856"/>
</dbReference>
<dbReference type="EvolutionaryTrace" id="P56926"/>
<dbReference type="Proteomes" id="UP000002524">
    <property type="component" value="Chromosome 1"/>
</dbReference>
<dbReference type="GO" id="GO:0005829">
    <property type="term" value="C:cytosol"/>
    <property type="evidence" value="ECO:0000318"/>
    <property type="project" value="GO_Central"/>
</dbReference>
<dbReference type="GO" id="GO:0005524">
    <property type="term" value="F:ATP binding"/>
    <property type="evidence" value="ECO:0007669"/>
    <property type="project" value="UniProtKB-UniRule"/>
</dbReference>
<dbReference type="GO" id="GO:0016884">
    <property type="term" value="F:carbon-nitrogen ligase activity, with glutamine as amido-N-donor"/>
    <property type="evidence" value="ECO:0007669"/>
    <property type="project" value="InterPro"/>
</dbReference>
<dbReference type="GO" id="GO:0004819">
    <property type="term" value="F:glutamine-tRNA ligase activity"/>
    <property type="evidence" value="ECO:0000318"/>
    <property type="project" value="GO_Central"/>
</dbReference>
<dbReference type="GO" id="GO:0000049">
    <property type="term" value="F:tRNA binding"/>
    <property type="evidence" value="ECO:0000269"/>
    <property type="project" value="DisProt"/>
</dbReference>
<dbReference type="GO" id="GO:0006425">
    <property type="term" value="P:glutaminyl-tRNA aminoacylation"/>
    <property type="evidence" value="ECO:0000318"/>
    <property type="project" value="GO_Central"/>
</dbReference>
<dbReference type="GO" id="GO:0006424">
    <property type="term" value="P:glutamyl-tRNA aminoacylation"/>
    <property type="evidence" value="ECO:0007669"/>
    <property type="project" value="UniProtKB-UniRule"/>
</dbReference>
<dbReference type="CDD" id="cd00807">
    <property type="entry name" value="GlnRS_core"/>
    <property type="match status" value="1"/>
</dbReference>
<dbReference type="DisProt" id="DP02496"/>
<dbReference type="FunFam" id="1.10.10.410:FF:000001">
    <property type="entry name" value="Aspartyl/glutamyl-tRNA(Asn/Gln) amidotransferase subunit B"/>
    <property type="match status" value="1"/>
</dbReference>
<dbReference type="FunFam" id="1.10.1160.10:FF:000001">
    <property type="entry name" value="Glutamine--tRNA ligase"/>
    <property type="match status" value="1"/>
</dbReference>
<dbReference type="FunFam" id="3.90.800.10:FF:000001">
    <property type="entry name" value="Glutamine--tRNA ligase"/>
    <property type="match status" value="1"/>
</dbReference>
<dbReference type="FunFam" id="3.40.50.620:FF:000037">
    <property type="entry name" value="Glutamine--tRNA ligase cytoplasmic"/>
    <property type="match status" value="1"/>
</dbReference>
<dbReference type="Gene3D" id="1.10.10.410">
    <property type="match status" value="1"/>
</dbReference>
<dbReference type="Gene3D" id="3.40.50.620">
    <property type="entry name" value="HUPs"/>
    <property type="match status" value="1"/>
</dbReference>
<dbReference type="Gene3D" id="2.40.240.10">
    <property type="entry name" value="Ribosomal Protein L25, Chain P"/>
    <property type="match status" value="2"/>
</dbReference>
<dbReference type="HAMAP" id="MF_00126">
    <property type="entry name" value="Gln_tRNA_synth"/>
    <property type="match status" value="1"/>
</dbReference>
<dbReference type="InterPro" id="IPR018027">
    <property type="entry name" value="Asn/Gln_amidotransferase"/>
</dbReference>
<dbReference type="InterPro" id="IPR003789">
    <property type="entry name" value="Asn/Gln_tRNA_amidoTrase-B-like"/>
</dbReference>
<dbReference type="InterPro" id="IPR023168">
    <property type="entry name" value="GatB_Yqey_C_2"/>
</dbReference>
<dbReference type="InterPro" id="IPR004514">
    <property type="entry name" value="Gln-tRNA-synth"/>
</dbReference>
<dbReference type="InterPro" id="IPR050132">
    <property type="entry name" value="Gln/Glu-tRNA_Ligase"/>
</dbReference>
<dbReference type="InterPro" id="IPR022861">
    <property type="entry name" value="Gln_tRNA_ligase_bac"/>
</dbReference>
<dbReference type="InterPro" id="IPR000924">
    <property type="entry name" value="Glu/Gln-tRNA-synth"/>
</dbReference>
<dbReference type="InterPro" id="IPR020058">
    <property type="entry name" value="Glu/Gln-tRNA-synth_Ib_cat-dom"/>
</dbReference>
<dbReference type="InterPro" id="IPR020059">
    <property type="entry name" value="Glu/Gln-tRNA-synth_Ib_codon-bd"/>
</dbReference>
<dbReference type="InterPro" id="IPR020056">
    <property type="entry name" value="Rbsml_bL25/Gln-tRNA_synth_N"/>
</dbReference>
<dbReference type="InterPro" id="IPR011035">
    <property type="entry name" value="Ribosomal_bL25/Gln-tRNA_synth"/>
</dbReference>
<dbReference type="InterPro" id="IPR014729">
    <property type="entry name" value="Rossmann-like_a/b/a_fold"/>
</dbReference>
<dbReference type="InterPro" id="IPR049437">
    <property type="entry name" value="tRNA-synt_1c_C2"/>
</dbReference>
<dbReference type="NCBIfam" id="TIGR00440">
    <property type="entry name" value="glnS"/>
    <property type="match status" value="1"/>
</dbReference>
<dbReference type="NCBIfam" id="NF011291">
    <property type="entry name" value="PRK14703.1"/>
    <property type="match status" value="1"/>
</dbReference>
<dbReference type="PANTHER" id="PTHR43097:SF5">
    <property type="entry name" value="GLUTAMATE--TRNA LIGASE"/>
    <property type="match status" value="1"/>
</dbReference>
<dbReference type="PANTHER" id="PTHR43097">
    <property type="entry name" value="GLUTAMINE-TRNA LIGASE"/>
    <property type="match status" value="1"/>
</dbReference>
<dbReference type="Pfam" id="PF02637">
    <property type="entry name" value="GatB_Yqey"/>
    <property type="match status" value="1"/>
</dbReference>
<dbReference type="Pfam" id="PF00749">
    <property type="entry name" value="tRNA-synt_1c"/>
    <property type="match status" value="1"/>
</dbReference>
<dbReference type="Pfam" id="PF03950">
    <property type="entry name" value="tRNA-synt_1c_C"/>
    <property type="match status" value="2"/>
</dbReference>
<dbReference type="Pfam" id="PF20974">
    <property type="entry name" value="tRNA-synt_1c_C2"/>
    <property type="match status" value="1"/>
</dbReference>
<dbReference type="PRINTS" id="PR00987">
    <property type="entry name" value="TRNASYNTHGLU"/>
</dbReference>
<dbReference type="SMART" id="SM00845">
    <property type="entry name" value="GatB_Yqey"/>
    <property type="match status" value="1"/>
</dbReference>
<dbReference type="SUPFAM" id="SSF89095">
    <property type="entry name" value="GatB/YqeY motif"/>
    <property type="match status" value="1"/>
</dbReference>
<dbReference type="SUPFAM" id="SSF52374">
    <property type="entry name" value="Nucleotidylyl transferase"/>
    <property type="match status" value="1"/>
</dbReference>
<dbReference type="SUPFAM" id="SSF50715">
    <property type="entry name" value="Ribosomal protein L25-like"/>
    <property type="match status" value="1"/>
</dbReference>
<evidence type="ECO:0000255" key="1">
    <source>
        <dbReference type="HAMAP-Rule" id="MF_00126"/>
    </source>
</evidence>
<evidence type="ECO:0000256" key="2">
    <source>
        <dbReference type="SAM" id="MobiDB-lite"/>
    </source>
</evidence>
<evidence type="ECO:0000305" key="3"/>
<evidence type="ECO:0007829" key="4">
    <source>
        <dbReference type="PDB" id="2HZ7"/>
    </source>
</evidence>
<gene>
    <name evidence="1" type="primary">glnS</name>
    <name type="ordered locus">DR_2611</name>
</gene>
<accession>P56926</accession>
<feature type="chain" id="PRO_0000195832" description="Glutamine--tRNA ligase">
    <location>
        <begin position="1"/>
        <end position="852"/>
    </location>
</feature>
<feature type="region of interest" description="Glutaminyl-tRNA synthetase">
    <location>
        <begin position="1"/>
        <end position="635"/>
    </location>
</feature>
<feature type="region of interest" description="Disordered" evidence="2">
    <location>
        <begin position="1"/>
        <end position="42"/>
    </location>
</feature>
<feature type="region of interest" description="Disordered" evidence="2">
    <location>
        <begin position="533"/>
        <end position="562"/>
    </location>
</feature>
<feature type="region of interest" description="Disordered" evidence="2">
    <location>
        <begin position="632"/>
        <end position="681"/>
    </location>
</feature>
<feature type="region of interest" description="GatB-like">
    <location>
        <begin position="636"/>
        <end position="852"/>
    </location>
</feature>
<feature type="short sequence motif" description="'HIGH' region" evidence="1">
    <location>
        <begin position="74"/>
        <end position="84"/>
    </location>
</feature>
<feature type="short sequence motif" description="'KMSKS' region" evidence="1">
    <location>
        <begin position="308"/>
        <end position="312"/>
    </location>
</feature>
<feature type="compositionally biased region" description="Low complexity" evidence="2">
    <location>
        <begin position="28"/>
        <end position="38"/>
    </location>
</feature>
<feature type="compositionally biased region" description="Low complexity" evidence="2">
    <location>
        <begin position="664"/>
        <end position="675"/>
    </location>
</feature>
<feature type="binding site" evidence="1">
    <location>
        <position position="107"/>
    </location>
    <ligand>
        <name>L-glutamine</name>
        <dbReference type="ChEBI" id="CHEBI:58359"/>
    </ligand>
</feature>
<feature type="binding site" evidence="1">
    <location>
        <position position="252"/>
    </location>
    <ligand>
        <name>L-glutamine</name>
        <dbReference type="ChEBI" id="CHEBI:58359"/>
    </ligand>
</feature>
<feature type="helix" evidence="4">
    <location>
        <begin position="51"/>
        <end position="61"/>
    </location>
</feature>
<feature type="strand" evidence="4">
    <location>
        <begin position="69"/>
        <end position="72"/>
    </location>
</feature>
<feature type="strand" evidence="4">
    <location>
        <begin position="76"/>
        <end position="78"/>
    </location>
</feature>
<feature type="helix" evidence="4">
    <location>
        <begin position="82"/>
        <end position="84"/>
    </location>
</feature>
<feature type="helix" evidence="4">
    <location>
        <begin position="85"/>
        <end position="97"/>
    </location>
</feature>
<feature type="strand" evidence="4">
    <location>
        <begin position="101"/>
        <end position="106"/>
    </location>
</feature>
<feature type="turn" evidence="4">
    <location>
        <begin position="111"/>
        <end position="113"/>
    </location>
</feature>
<feature type="helix" evidence="4">
    <location>
        <begin position="116"/>
        <end position="129"/>
    </location>
</feature>
<feature type="strand" evidence="4">
    <location>
        <begin position="137"/>
        <end position="139"/>
    </location>
</feature>
<feature type="helix" evidence="4">
    <location>
        <begin position="140"/>
        <end position="143"/>
    </location>
</feature>
<feature type="helix" evidence="4">
    <location>
        <begin position="144"/>
        <end position="156"/>
    </location>
</feature>
<feature type="strand" evidence="4">
    <location>
        <begin position="159"/>
        <end position="163"/>
    </location>
</feature>
<feature type="helix" evidence="4">
    <location>
        <begin position="167"/>
        <end position="174"/>
    </location>
</feature>
<feature type="turn" evidence="4">
    <location>
        <begin position="185"/>
        <end position="188"/>
    </location>
</feature>
<feature type="helix" evidence="4">
    <location>
        <begin position="191"/>
        <end position="202"/>
    </location>
</feature>
<feature type="strand" evidence="4">
    <location>
        <begin position="212"/>
        <end position="215"/>
    </location>
</feature>
<feature type="helix" evidence="4">
    <location>
        <begin position="224"/>
        <end position="226"/>
    </location>
</feature>
<feature type="strand" evidence="4">
    <location>
        <begin position="230"/>
        <end position="234"/>
    </location>
</feature>
<feature type="turn" evidence="4">
    <location>
        <begin position="240"/>
        <end position="242"/>
    </location>
</feature>
<feature type="strand" evidence="4">
    <location>
        <begin position="247"/>
        <end position="250"/>
    </location>
</feature>
<feature type="helix" evidence="4">
    <location>
        <begin position="252"/>
        <end position="263"/>
    </location>
</feature>
<feature type="strand" evidence="4">
    <location>
        <begin position="266"/>
        <end position="271"/>
    </location>
</feature>
<feature type="helix" evidence="4">
    <location>
        <begin position="272"/>
        <end position="274"/>
    </location>
</feature>
<feature type="turn" evidence="4">
    <location>
        <begin position="275"/>
        <end position="277"/>
    </location>
</feature>
<feature type="helix" evidence="4">
    <location>
        <begin position="278"/>
        <end position="287"/>
    </location>
</feature>
<feature type="strand" evidence="4">
    <location>
        <begin position="295"/>
        <end position="299"/>
    </location>
</feature>
<feature type="strand" evidence="4">
    <location>
        <begin position="302"/>
        <end position="304"/>
    </location>
</feature>
<feature type="helix" evidence="4">
    <location>
        <begin position="311"/>
        <end position="319"/>
    </location>
</feature>
<feature type="strand" evidence="4">
    <location>
        <begin position="322"/>
        <end position="325"/>
    </location>
</feature>
<feature type="strand" evidence="4">
    <location>
        <begin position="331"/>
        <end position="333"/>
    </location>
</feature>
<feature type="helix" evidence="4">
    <location>
        <begin position="334"/>
        <end position="340"/>
    </location>
</feature>
<feature type="helix" evidence="4">
    <location>
        <begin position="344"/>
        <end position="353"/>
    </location>
</feature>
<feature type="strand" evidence="4">
    <location>
        <begin position="361"/>
        <end position="363"/>
    </location>
</feature>
<feature type="helix" evidence="4">
    <location>
        <begin position="365"/>
        <end position="377"/>
    </location>
</feature>
<feature type="strand" evidence="4">
    <location>
        <begin position="385"/>
        <end position="394"/>
    </location>
</feature>
<feature type="strand" evidence="4">
    <location>
        <begin position="401"/>
        <end position="408"/>
    </location>
</feature>
<feature type="helix" evidence="4">
    <location>
        <begin position="410"/>
        <end position="414"/>
    </location>
</feature>
<feature type="strand" evidence="4">
    <location>
        <begin position="424"/>
        <end position="426"/>
    </location>
</feature>
<feature type="helix" evidence="4">
    <location>
        <begin position="431"/>
        <end position="433"/>
    </location>
</feature>
<feature type="strand" evidence="4">
    <location>
        <begin position="435"/>
        <end position="440"/>
    </location>
</feature>
<feature type="strand" evidence="4">
    <location>
        <begin position="442"/>
        <end position="447"/>
    </location>
</feature>
<feature type="helix" evidence="4">
    <location>
        <begin position="448"/>
        <end position="450"/>
    </location>
</feature>
<feature type="strand" evidence="4">
    <location>
        <begin position="467"/>
        <end position="470"/>
    </location>
</feature>
<feature type="turn" evidence="4">
    <location>
        <begin position="471"/>
        <end position="473"/>
    </location>
</feature>
<feature type="strand" evidence="4">
    <location>
        <begin position="474"/>
        <end position="483"/>
    </location>
</feature>
<feature type="strand" evidence="4">
    <location>
        <begin position="489"/>
        <end position="496"/>
    </location>
</feature>
<feature type="turn" evidence="4">
    <location>
        <begin position="512"/>
        <end position="514"/>
    </location>
</feature>
<feature type="strand" evidence="4">
    <location>
        <begin position="516"/>
        <end position="523"/>
    </location>
</feature>
<feature type="strand" evidence="4">
    <location>
        <begin position="526"/>
        <end position="530"/>
    </location>
</feature>
<feature type="helix" evidence="4">
    <location>
        <begin position="566"/>
        <end position="569"/>
    </location>
</feature>
<feature type="strand" evidence="4">
    <location>
        <begin position="574"/>
        <end position="582"/>
    </location>
</feature>
<feature type="helix" evidence="4">
    <location>
        <begin position="584"/>
        <end position="588"/>
    </location>
</feature>
<feature type="strand" evidence="4">
    <location>
        <begin position="594"/>
        <end position="597"/>
    </location>
</feature>
<feature type="turn" evidence="4">
    <location>
        <begin position="598"/>
        <end position="600"/>
    </location>
</feature>
<feature type="strand" evidence="4">
    <location>
        <begin position="601"/>
        <end position="605"/>
    </location>
</feature>
<feature type="helix" evidence="4">
    <location>
        <begin position="607"/>
        <end position="611"/>
    </location>
</feature>
<feature type="strand" evidence="4">
    <location>
        <begin position="621"/>
        <end position="626"/>
    </location>
</feature>
<name>SYQ_DEIRA</name>
<reference key="1">
    <citation type="journal article" date="1999" name="Science">
        <title>Genome sequence of the radioresistant bacterium Deinococcus radiodurans R1.</title>
        <authorList>
            <person name="White O."/>
            <person name="Eisen J.A."/>
            <person name="Heidelberg J.F."/>
            <person name="Hickey E.K."/>
            <person name="Peterson J.D."/>
            <person name="Dodson R.J."/>
            <person name="Haft D.H."/>
            <person name="Gwinn M.L."/>
            <person name="Nelson W.C."/>
            <person name="Richardson D.L."/>
            <person name="Moffat K.S."/>
            <person name="Qin H."/>
            <person name="Jiang L."/>
            <person name="Pamphile W."/>
            <person name="Crosby M."/>
            <person name="Shen M."/>
            <person name="Vamathevan J.J."/>
            <person name="Lam P."/>
            <person name="McDonald L.A."/>
            <person name="Utterback T.R."/>
            <person name="Zalewski C."/>
            <person name="Makarova K.S."/>
            <person name="Aravind L."/>
            <person name="Daly M.J."/>
            <person name="Minton K.W."/>
            <person name="Fleischmann R.D."/>
            <person name="Ketchum K.A."/>
            <person name="Nelson K.E."/>
            <person name="Salzberg S.L."/>
            <person name="Smith H.O."/>
            <person name="Venter J.C."/>
            <person name="Fraser C.M."/>
        </authorList>
    </citation>
    <scope>NUCLEOTIDE SEQUENCE [LARGE SCALE GENOMIC DNA]</scope>
    <source>
        <strain>ATCC 13939 / DSM 20539 / JCM 16871 / CCUG 27074 / LMG 4051 / NBRC 15346 / NCIMB 9279 / VKM B-1422 / R1</strain>
    </source>
</reference>
<keyword id="KW-0002">3D-structure</keyword>
<keyword id="KW-0030">Aminoacyl-tRNA synthetase</keyword>
<keyword id="KW-0067">ATP-binding</keyword>
<keyword id="KW-0963">Cytoplasm</keyword>
<keyword id="KW-0436">Ligase</keyword>
<keyword id="KW-0547">Nucleotide-binding</keyword>
<keyword id="KW-0648">Protein biosynthesis</keyword>
<keyword id="KW-1185">Reference proteome</keyword>